<reference key="1">
    <citation type="journal article" date="2005" name="BMC Genomics">
        <title>Bacterial genome adaptation to niches: divergence of the potential virulence genes in three Burkholderia species of different survival strategies.</title>
        <authorList>
            <person name="Kim H.S."/>
            <person name="Schell M.A."/>
            <person name="Yu Y."/>
            <person name="Ulrich R.L."/>
            <person name="Sarria S.H."/>
            <person name="Nierman W.C."/>
            <person name="DeShazer D."/>
        </authorList>
    </citation>
    <scope>NUCLEOTIDE SEQUENCE [LARGE SCALE GENOMIC DNA]</scope>
    <source>
        <strain>ATCC 700388 / DSM 13276 / CCUG 48851 / CIP 106301 / E264</strain>
    </source>
</reference>
<keyword id="KW-0997">Cell inner membrane</keyword>
<keyword id="KW-1003">Cell membrane</keyword>
<keyword id="KW-0472">Membrane</keyword>
<keyword id="KW-0653">Protein transport</keyword>
<keyword id="KW-0811">Translocation</keyword>
<keyword id="KW-0812">Transmembrane</keyword>
<keyword id="KW-1133">Transmembrane helix</keyword>
<keyword id="KW-0813">Transport</keyword>
<dbReference type="EMBL" id="CP000086">
    <property type="protein sequence ID" value="ABC38523.1"/>
    <property type="molecule type" value="Genomic_DNA"/>
</dbReference>
<dbReference type="RefSeq" id="WP_009909978.1">
    <property type="nucleotide sequence ID" value="NZ_CP008786.1"/>
</dbReference>
<dbReference type="SMR" id="Q2SUB4"/>
<dbReference type="GeneID" id="45122669"/>
<dbReference type="KEGG" id="bte:BTH_I2981"/>
<dbReference type="HOGENOM" id="CLU_086034_1_1_4"/>
<dbReference type="Proteomes" id="UP000001930">
    <property type="component" value="Chromosome I"/>
</dbReference>
<dbReference type="GO" id="GO:0033281">
    <property type="term" value="C:TAT protein transport complex"/>
    <property type="evidence" value="ECO:0007669"/>
    <property type="project" value="UniProtKB-UniRule"/>
</dbReference>
<dbReference type="GO" id="GO:0008320">
    <property type="term" value="F:protein transmembrane transporter activity"/>
    <property type="evidence" value="ECO:0007669"/>
    <property type="project" value="UniProtKB-UniRule"/>
</dbReference>
<dbReference type="GO" id="GO:0043953">
    <property type="term" value="P:protein transport by the Tat complex"/>
    <property type="evidence" value="ECO:0007669"/>
    <property type="project" value="UniProtKB-UniRule"/>
</dbReference>
<dbReference type="Gene3D" id="1.20.5.3310">
    <property type="match status" value="1"/>
</dbReference>
<dbReference type="HAMAP" id="MF_00237">
    <property type="entry name" value="TatB"/>
    <property type="match status" value="1"/>
</dbReference>
<dbReference type="InterPro" id="IPR003369">
    <property type="entry name" value="TatA/B/E"/>
</dbReference>
<dbReference type="InterPro" id="IPR018448">
    <property type="entry name" value="TatB"/>
</dbReference>
<dbReference type="NCBIfam" id="TIGR01410">
    <property type="entry name" value="tatB"/>
    <property type="match status" value="1"/>
</dbReference>
<dbReference type="PANTHER" id="PTHR33162">
    <property type="entry name" value="SEC-INDEPENDENT PROTEIN TRANSLOCASE PROTEIN TATA, CHLOROPLASTIC"/>
    <property type="match status" value="1"/>
</dbReference>
<dbReference type="PANTHER" id="PTHR33162:SF1">
    <property type="entry name" value="SEC-INDEPENDENT PROTEIN TRANSLOCASE PROTEIN TATA, CHLOROPLASTIC"/>
    <property type="match status" value="1"/>
</dbReference>
<dbReference type="Pfam" id="PF02416">
    <property type="entry name" value="TatA_B_E"/>
    <property type="match status" value="1"/>
</dbReference>
<dbReference type="PRINTS" id="PR01506">
    <property type="entry name" value="TATBPROTEIN"/>
</dbReference>
<evidence type="ECO:0000255" key="1">
    <source>
        <dbReference type="HAMAP-Rule" id="MF_00237"/>
    </source>
</evidence>
<evidence type="ECO:0000256" key="2">
    <source>
        <dbReference type="SAM" id="MobiDB-lite"/>
    </source>
</evidence>
<protein>
    <recommendedName>
        <fullName evidence="1">Sec-independent protein translocase protein TatB</fullName>
    </recommendedName>
</protein>
<accession>Q2SUB4</accession>
<gene>
    <name evidence="1" type="primary">tatB</name>
    <name type="ordered locus">BTH_I2981</name>
</gene>
<name>TATB_BURTA</name>
<sequence>MLDLGLSKMALIGVVALVVLGPERLPRVARTAGALFGRAQRYINDVKAEVSREIELDALRTMKSDFEQAARNVENTIHDNLREHERDLNAAWNSAVSSGDPAAADASGGLGATSDEPSWRTVAAAPAKRRNWRVKKTATPVWYKRATMRRTQVQSGAARVARHQPSSLRRPARFF</sequence>
<organism>
    <name type="scientific">Burkholderia thailandensis (strain ATCC 700388 / DSM 13276 / CCUG 48851 / CIP 106301 / E264)</name>
    <dbReference type="NCBI Taxonomy" id="271848"/>
    <lineage>
        <taxon>Bacteria</taxon>
        <taxon>Pseudomonadati</taxon>
        <taxon>Pseudomonadota</taxon>
        <taxon>Betaproteobacteria</taxon>
        <taxon>Burkholderiales</taxon>
        <taxon>Burkholderiaceae</taxon>
        <taxon>Burkholderia</taxon>
        <taxon>pseudomallei group</taxon>
    </lineage>
</organism>
<comment type="function">
    <text evidence="1">Part of the twin-arginine translocation (Tat) system that transports large folded proteins containing a characteristic twin-arginine motif in their signal peptide across membranes. Together with TatC, TatB is part of a receptor directly interacting with Tat signal peptides. TatB may form an oligomeric binding site that transiently accommodates folded Tat precursor proteins before their translocation.</text>
</comment>
<comment type="subunit">
    <text evidence="1">The Tat system comprises two distinct complexes: a TatABC complex, containing multiple copies of TatA, TatB and TatC subunits, and a separate TatA complex, containing only TatA subunits. Substrates initially bind to the TatABC complex, which probably triggers association of the separate TatA complex to form the active translocon.</text>
</comment>
<comment type="subcellular location">
    <subcellularLocation>
        <location evidence="1">Cell inner membrane</location>
        <topology evidence="1">Single-pass membrane protein</topology>
    </subcellularLocation>
</comment>
<comment type="similarity">
    <text evidence="1">Belongs to the TatB family.</text>
</comment>
<proteinExistence type="inferred from homology"/>
<feature type="chain" id="PRO_0000301157" description="Sec-independent protein translocase protein TatB">
    <location>
        <begin position="1"/>
        <end position="175"/>
    </location>
</feature>
<feature type="transmembrane region" description="Helical" evidence="1">
    <location>
        <begin position="1"/>
        <end position="21"/>
    </location>
</feature>
<feature type="region of interest" description="Disordered" evidence="2">
    <location>
        <begin position="99"/>
        <end position="118"/>
    </location>
</feature>
<feature type="compositionally biased region" description="Low complexity" evidence="2">
    <location>
        <begin position="99"/>
        <end position="115"/>
    </location>
</feature>